<evidence type="ECO:0000255" key="1">
    <source>
        <dbReference type="HAMAP-Rule" id="MF_01396"/>
    </source>
</evidence>
<protein>
    <recommendedName>
        <fullName evidence="1">ATP synthase subunit c</fullName>
    </recommendedName>
    <alternativeName>
        <fullName evidence="1">ATP synthase F(0) sector subunit c</fullName>
    </alternativeName>
    <alternativeName>
        <fullName evidence="1">F-type ATPase subunit c</fullName>
        <shortName evidence="1">F-ATPase subunit c</shortName>
    </alternativeName>
    <alternativeName>
        <fullName evidence="1">Lipid-binding protein</fullName>
    </alternativeName>
</protein>
<keyword id="KW-0066">ATP synthesis</keyword>
<keyword id="KW-1003">Cell membrane</keyword>
<keyword id="KW-0138">CF(0)</keyword>
<keyword id="KW-0375">Hydrogen ion transport</keyword>
<keyword id="KW-0406">Ion transport</keyword>
<keyword id="KW-0446">Lipid-binding</keyword>
<keyword id="KW-0472">Membrane</keyword>
<keyword id="KW-1185">Reference proteome</keyword>
<keyword id="KW-0812">Transmembrane</keyword>
<keyword id="KW-1133">Transmembrane helix</keyword>
<keyword id="KW-0813">Transport</keyword>
<gene>
    <name evidence="1" type="primary">atpE</name>
    <name type="ordered locus">Sca_1612</name>
</gene>
<dbReference type="EMBL" id="AM295250">
    <property type="protein sequence ID" value="CAL28518.1"/>
    <property type="molecule type" value="Genomic_DNA"/>
</dbReference>
<dbReference type="RefSeq" id="WP_015900858.1">
    <property type="nucleotide sequence ID" value="NC_012121.1"/>
</dbReference>
<dbReference type="SMR" id="B9DME9"/>
<dbReference type="GeneID" id="93794065"/>
<dbReference type="KEGG" id="sca:SCA_1612"/>
<dbReference type="eggNOG" id="COG0636">
    <property type="taxonomic scope" value="Bacteria"/>
</dbReference>
<dbReference type="HOGENOM" id="CLU_148047_1_1_9"/>
<dbReference type="OrthoDB" id="2357540at2"/>
<dbReference type="BioCyc" id="SCAR396513:SCA_RS08185-MONOMER"/>
<dbReference type="Proteomes" id="UP000000444">
    <property type="component" value="Chromosome"/>
</dbReference>
<dbReference type="GO" id="GO:0005886">
    <property type="term" value="C:plasma membrane"/>
    <property type="evidence" value="ECO:0007669"/>
    <property type="project" value="UniProtKB-SubCell"/>
</dbReference>
<dbReference type="GO" id="GO:0045259">
    <property type="term" value="C:proton-transporting ATP synthase complex"/>
    <property type="evidence" value="ECO:0007669"/>
    <property type="project" value="UniProtKB-KW"/>
</dbReference>
<dbReference type="GO" id="GO:0033177">
    <property type="term" value="C:proton-transporting two-sector ATPase complex, proton-transporting domain"/>
    <property type="evidence" value="ECO:0007669"/>
    <property type="project" value="InterPro"/>
</dbReference>
<dbReference type="GO" id="GO:0008289">
    <property type="term" value="F:lipid binding"/>
    <property type="evidence" value="ECO:0007669"/>
    <property type="project" value="UniProtKB-KW"/>
</dbReference>
<dbReference type="GO" id="GO:0046933">
    <property type="term" value="F:proton-transporting ATP synthase activity, rotational mechanism"/>
    <property type="evidence" value="ECO:0007669"/>
    <property type="project" value="UniProtKB-UniRule"/>
</dbReference>
<dbReference type="CDD" id="cd18185">
    <property type="entry name" value="ATP-synt_Fo_c_ATPE"/>
    <property type="match status" value="1"/>
</dbReference>
<dbReference type="FunFam" id="1.20.20.10:FF:000004">
    <property type="entry name" value="ATP synthase subunit c"/>
    <property type="match status" value="1"/>
</dbReference>
<dbReference type="Gene3D" id="1.20.20.10">
    <property type="entry name" value="F1F0 ATP synthase subunit C"/>
    <property type="match status" value="1"/>
</dbReference>
<dbReference type="HAMAP" id="MF_01396">
    <property type="entry name" value="ATP_synth_c_bact"/>
    <property type="match status" value="1"/>
</dbReference>
<dbReference type="InterPro" id="IPR005953">
    <property type="entry name" value="ATP_synth_csu_bac/chlpt"/>
</dbReference>
<dbReference type="InterPro" id="IPR000454">
    <property type="entry name" value="ATP_synth_F0_csu"/>
</dbReference>
<dbReference type="InterPro" id="IPR020537">
    <property type="entry name" value="ATP_synth_F0_csu_DDCD_BS"/>
</dbReference>
<dbReference type="InterPro" id="IPR038662">
    <property type="entry name" value="ATP_synth_F0_csu_sf"/>
</dbReference>
<dbReference type="InterPro" id="IPR002379">
    <property type="entry name" value="ATPase_proteolipid_c-like_dom"/>
</dbReference>
<dbReference type="InterPro" id="IPR035921">
    <property type="entry name" value="F/V-ATP_Csub_sf"/>
</dbReference>
<dbReference type="NCBIfam" id="TIGR01260">
    <property type="entry name" value="ATP_synt_c"/>
    <property type="match status" value="1"/>
</dbReference>
<dbReference type="NCBIfam" id="NF005363">
    <property type="entry name" value="PRK06876.1"/>
    <property type="match status" value="1"/>
</dbReference>
<dbReference type="PANTHER" id="PTHR10031">
    <property type="entry name" value="ATP SYNTHASE LIPID-BINDING PROTEIN, MITOCHONDRIAL"/>
    <property type="match status" value="1"/>
</dbReference>
<dbReference type="PANTHER" id="PTHR10031:SF0">
    <property type="entry name" value="ATPASE PROTEIN 9"/>
    <property type="match status" value="1"/>
</dbReference>
<dbReference type="Pfam" id="PF00137">
    <property type="entry name" value="ATP-synt_C"/>
    <property type="match status" value="1"/>
</dbReference>
<dbReference type="PRINTS" id="PR00124">
    <property type="entry name" value="ATPASEC"/>
</dbReference>
<dbReference type="SUPFAM" id="SSF81333">
    <property type="entry name" value="F1F0 ATP synthase subunit C"/>
    <property type="match status" value="1"/>
</dbReference>
<dbReference type="PROSITE" id="PS00605">
    <property type="entry name" value="ATPASE_C"/>
    <property type="match status" value="1"/>
</dbReference>
<feature type="chain" id="PRO_1000184507" description="ATP synthase subunit c">
    <location>
        <begin position="1"/>
        <end position="70"/>
    </location>
</feature>
<feature type="transmembrane region" description="Helical" evidence="1">
    <location>
        <begin position="4"/>
        <end position="24"/>
    </location>
</feature>
<feature type="transmembrane region" description="Helical" evidence="1">
    <location>
        <begin position="47"/>
        <end position="67"/>
    </location>
</feature>
<feature type="site" description="Reversibly protonated during proton transport" evidence="1">
    <location>
        <position position="54"/>
    </location>
</feature>
<organism>
    <name type="scientific">Staphylococcus carnosus (strain TM300)</name>
    <dbReference type="NCBI Taxonomy" id="396513"/>
    <lineage>
        <taxon>Bacteria</taxon>
        <taxon>Bacillati</taxon>
        <taxon>Bacillota</taxon>
        <taxon>Bacilli</taxon>
        <taxon>Bacillales</taxon>
        <taxon>Staphylococcaceae</taxon>
        <taxon>Staphylococcus</taxon>
    </lineage>
</organism>
<accession>B9DME9</accession>
<sequence>MNLIAAAIAIGLSALGAGIGNGLIVSRTVEGVARQPEARGQLMSIMFIGIGLVEALPILGLVISFIVLFQ</sequence>
<name>ATPL_STACT</name>
<proteinExistence type="inferred from homology"/>
<reference key="1">
    <citation type="journal article" date="2009" name="Appl. Environ. Microbiol.">
        <title>Genome analysis of the meat starter culture bacterium Staphylococcus carnosus TM300.</title>
        <authorList>
            <person name="Rosenstein R."/>
            <person name="Nerz C."/>
            <person name="Biswas L."/>
            <person name="Resch A."/>
            <person name="Raddatz G."/>
            <person name="Schuster S.C."/>
            <person name="Goetz F."/>
        </authorList>
    </citation>
    <scope>NUCLEOTIDE SEQUENCE [LARGE SCALE GENOMIC DNA]</scope>
    <source>
        <strain>TM300</strain>
    </source>
</reference>
<comment type="function">
    <text evidence="1">F(1)F(0) ATP synthase produces ATP from ADP in the presence of a proton or sodium gradient. F-type ATPases consist of two structural domains, F(1) containing the extramembraneous catalytic core and F(0) containing the membrane proton channel, linked together by a central stalk and a peripheral stalk. During catalysis, ATP synthesis in the catalytic domain of F(1) is coupled via a rotary mechanism of the central stalk subunits to proton translocation.</text>
</comment>
<comment type="function">
    <text evidence="1">Key component of the F(0) channel; it plays a direct role in translocation across the membrane. A homomeric c-ring of between 10-14 subunits forms the central stalk rotor element with the F(1) delta and epsilon subunits.</text>
</comment>
<comment type="subunit">
    <text evidence="1">F-type ATPases have 2 components, F(1) - the catalytic core - and F(0) - the membrane proton channel. F(1) has five subunits: alpha(3), beta(3), gamma(1), delta(1), epsilon(1). F(0) has three main subunits: a(1), b(2) and c(10-14). The alpha and beta chains form an alternating ring which encloses part of the gamma chain. F(1) is attached to F(0) by a central stalk formed by the gamma and epsilon chains, while a peripheral stalk is formed by the delta and b chains.</text>
</comment>
<comment type="subcellular location">
    <subcellularLocation>
        <location evidence="1">Cell membrane</location>
        <topology evidence="1">Multi-pass membrane protein</topology>
    </subcellularLocation>
</comment>
<comment type="similarity">
    <text evidence="1">Belongs to the ATPase C chain family.</text>
</comment>